<protein>
    <recommendedName>
        <fullName evidence="1">Dihydroxy-acid dehydratase</fullName>
        <shortName evidence="1">DAD</shortName>
        <ecNumber evidence="1">4.2.1.9</ecNumber>
    </recommendedName>
</protein>
<sequence length="616" mass="65593">MPKYRSATTTHGRNMAGARALWRATGMTDDDFGKPIIAVVNSFTQFVPGHVHLRDLGKLVAEEIEASGGVAKEFNTIAVDDGIAMGHGGMLYSLPSRELIADSVEYMVNAHCADAMVCISNCDKITPGMLMASLRLNIPVIFVSGGPMEAGKTKLSDKIIKLDLVDAMIQGANPNVSDADSDQIERSACPTCGSCSGMFTANSMNCLTEALGLSQPGNGSLLATHADRRELFLNAGRRIVALTKRYYEQDDESALPRNIASKAAFENAMTLDIAMGGSTNTVLHLLAAAQEGEIDFDISDIDRLSRLVPHLCKVAPSTPKYHMEDVHRAGGVLGILGELDRAGLMDNSVRNILGLSLRETLDRYDIMLTQDDAVKKMFRAGPAGIRTTQAFSQDTRWETLDDDRQHGCIRAREFAFSQDGGLAVLYGNLAENGCIVKTAGVDEGSLVFSGPAKVYESQDDAVAAILGGKVVAGDVVVIRYEGPKGGPGMQEMLYPTTYLKSMGLGKACALITDGRFSGGTSGLSIGHASPEAASGGTIALVKDGDIINIDIPQRGIQLDVAENELAARRLEEDARGEAAYTPHGRERQVSFALRAYATLATSADKGAVRDKSKLGG</sequence>
<organism>
    <name type="scientific">Erwinia tasmaniensis (strain DSM 17950 / CFBP 7177 / CIP 109463 / NCPPB 4357 / Et1/99)</name>
    <dbReference type="NCBI Taxonomy" id="465817"/>
    <lineage>
        <taxon>Bacteria</taxon>
        <taxon>Pseudomonadati</taxon>
        <taxon>Pseudomonadota</taxon>
        <taxon>Gammaproteobacteria</taxon>
        <taxon>Enterobacterales</taxon>
        <taxon>Erwiniaceae</taxon>
        <taxon>Erwinia</taxon>
    </lineage>
</organism>
<evidence type="ECO:0000255" key="1">
    <source>
        <dbReference type="HAMAP-Rule" id="MF_00012"/>
    </source>
</evidence>
<dbReference type="EC" id="4.2.1.9" evidence="1"/>
<dbReference type="EMBL" id="CU468135">
    <property type="protein sequence ID" value="CAO95233.1"/>
    <property type="molecule type" value="Genomic_DNA"/>
</dbReference>
<dbReference type="RefSeq" id="WP_012439953.1">
    <property type="nucleotide sequence ID" value="NC_010694.1"/>
</dbReference>
<dbReference type="SMR" id="B2VI72"/>
<dbReference type="STRING" id="465817.ETA_01870"/>
<dbReference type="KEGG" id="eta:ETA_01870"/>
<dbReference type="eggNOG" id="COG0129">
    <property type="taxonomic scope" value="Bacteria"/>
</dbReference>
<dbReference type="HOGENOM" id="CLU_014271_4_2_6"/>
<dbReference type="OrthoDB" id="9807077at2"/>
<dbReference type="UniPathway" id="UPA00047">
    <property type="reaction ID" value="UER00057"/>
</dbReference>
<dbReference type="UniPathway" id="UPA00049">
    <property type="reaction ID" value="UER00061"/>
</dbReference>
<dbReference type="Proteomes" id="UP000001726">
    <property type="component" value="Chromosome"/>
</dbReference>
<dbReference type="GO" id="GO:0005829">
    <property type="term" value="C:cytosol"/>
    <property type="evidence" value="ECO:0007669"/>
    <property type="project" value="TreeGrafter"/>
</dbReference>
<dbReference type="GO" id="GO:0051537">
    <property type="term" value="F:2 iron, 2 sulfur cluster binding"/>
    <property type="evidence" value="ECO:0007669"/>
    <property type="project" value="UniProtKB-UniRule"/>
</dbReference>
<dbReference type="GO" id="GO:0004160">
    <property type="term" value="F:dihydroxy-acid dehydratase activity"/>
    <property type="evidence" value="ECO:0007669"/>
    <property type="project" value="UniProtKB-UniRule"/>
</dbReference>
<dbReference type="GO" id="GO:0000287">
    <property type="term" value="F:magnesium ion binding"/>
    <property type="evidence" value="ECO:0007669"/>
    <property type="project" value="UniProtKB-UniRule"/>
</dbReference>
<dbReference type="GO" id="GO:0009097">
    <property type="term" value="P:isoleucine biosynthetic process"/>
    <property type="evidence" value="ECO:0007669"/>
    <property type="project" value="UniProtKB-UniRule"/>
</dbReference>
<dbReference type="GO" id="GO:0009099">
    <property type="term" value="P:L-valine biosynthetic process"/>
    <property type="evidence" value="ECO:0007669"/>
    <property type="project" value="UniProtKB-UniRule"/>
</dbReference>
<dbReference type="FunFam" id="3.50.30.80:FF:000001">
    <property type="entry name" value="Dihydroxy-acid dehydratase"/>
    <property type="match status" value="1"/>
</dbReference>
<dbReference type="Gene3D" id="3.50.30.80">
    <property type="entry name" value="IlvD/EDD C-terminal domain-like"/>
    <property type="match status" value="1"/>
</dbReference>
<dbReference type="HAMAP" id="MF_00012">
    <property type="entry name" value="IlvD"/>
    <property type="match status" value="1"/>
</dbReference>
<dbReference type="InterPro" id="IPR042096">
    <property type="entry name" value="Dihydro-acid_dehy_C"/>
</dbReference>
<dbReference type="InterPro" id="IPR004404">
    <property type="entry name" value="DihydroxyA_deHydtase"/>
</dbReference>
<dbReference type="InterPro" id="IPR020558">
    <property type="entry name" value="DiOHA_6PGluconate_deHydtase_CS"/>
</dbReference>
<dbReference type="InterPro" id="IPR056740">
    <property type="entry name" value="ILV_EDD_C"/>
</dbReference>
<dbReference type="InterPro" id="IPR000581">
    <property type="entry name" value="ILV_EDD_N"/>
</dbReference>
<dbReference type="InterPro" id="IPR037237">
    <property type="entry name" value="IlvD/EDD_N"/>
</dbReference>
<dbReference type="NCBIfam" id="TIGR00110">
    <property type="entry name" value="ilvD"/>
    <property type="match status" value="1"/>
</dbReference>
<dbReference type="NCBIfam" id="NF009103">
    <property type="entry name" value="PRK12448.1"/>
    <property type="match status" value="1"/>
</dbReference>
<dbReference type="PANTHER" id="PTHR43661">
    <property type="entry name" value="D-XYLONATE DEHYDRATASE"/>
    <property type="match status" value="1"/>
</dbReference>
<dbReference type="PANTHER" id="PTHR43661:SF3">
    <property type="entry name" value="D-XYLONATE DEHYDRATASE YAGF-RELATED"/>
    <property type="match status" value="1"/>
</dbReference>
<dbReference type="Pfam" id="PF24877">
    <property type="entry name" value="ILV_EDD_C"/>
    <property type="match status" value="1"/>
</dbReference>
<dbReference type="Pfam" id="PF00920">
    <property type="entry name" value="ILVD_EDD_N"/>
    <property type="match status" value="1"/>
</dbReference>
<dbReference type="SUPFAM" id="SSF143975">
    <property type="entry name" value="IlvD/EDD N-terminal domain-like"/>
    <property type="match status" value="1"/>
</dbReference>
<dbReference type="SUPFAM" id="SSF52016">
    <property type="entry name" value="LeuD/IlvD-like"/>
    <property type="match status" value="1"/>
</dbReference>
<dbReference type="PROSITE" id="PS00886">
    <property type="entry name" value="ILVD_EDD_1"/>
    <property type="match status" value="1"/>
</dbReference>
<dbReference type="PROSITE" id="PS00887">
    <property type="entry name" value="ILVD_EDD_2"/>
    <property type="match status" value="1"/>
</dbReference>
<comment type="function">
    <text evidence="1">Functions in the biosynthesis of branched-chain amino acids. Catalyzes the dehydration of (2R,3R)-2,3-dihydroxy-3-methylpentanoate (2,3-dihydroxy-3-methylvalerate) into 2-oxo-3-methylpentanoate (2-oxo-3-methylvalerate) and of (2R)-2,3-dihydroxy-3-methylbutanoate (2,3-dihydroxyisovalerate) into 2-oxo-3-methylbutanoate (2-oxoisovalerate), the penultimate precursor to L-isoleucine and L-valine, respectively.</text>
</comment>
<comment type="catalytic activity">
    <reaction evidence="1">
        <text>(2R)-2,3-dihydroxy-3-methylbutanoate = 3-methyl-2-oxobutanoate + H2O</text>
        <dbReference type="Rhea" id="RHEA:24809"/>
        <dbReference type="ChEBI" id="CHEBI:11851"/>
        <dbReference type="ChEBI" id="CHEBI:15377"/>
        <dbReference type="ChEBI" id="CHEBI:49072"/>
        <dbReference type="EC" id="4.2.1.9"/>
    </reaction>
    <physiologicalReaction direction="left-to-right" evidence="1">
        <dbReference type="Rhea" id="RHEA:24810"/>
    </physiologicalReaction>
</comment>
<comment type="catalytic activity">
    <reaction evidence="1">
        <text>(2R,3R)-2,3-dihydroxy-3-methylpentanoate = (S)-3-methyl-2-oxopentanoate + H2O</text>
        <dbReference type="Rhea" id="RHEA:27694"/>
        <dbReference type="ChEBI" id="CHEBI:15377"/>
        <dbReference type="ChEBI" id="CHEBI:35146"/>
        <dbReference type="ChEBI" id="CHEBI:49258"/>
        <dbReference type="EC" id="4.2.1.9"/>
    </reaction>
    <physiologicalReaction direction="left-to-right" evidence="1">
        <dbReference type="Rhea" id="RHEA:27695"/>
    </physiologicalReaction>
</comment>
<comment type="cofactor">
    <cofactor evidence="1">
        <name>[2Fe-2S] cluster</name>
        <dbReference type="ChEBI" id="CHEBI:190135"/>
    </cofactor>
    <text evidence="1">Binds 1 [2Fe-2S] cluster per subunit. This cluster acts as a Lewis acid cofactor.</text>
</comment>
<comment type="cofactor">
    <cofactor evidence="1">
        <name>Mg(2+)</name>
        <dbReference type="ChEBI" id="CHEBI:18420"/>
    </cofactor>
</comment>
<comment type="pathway">
    <text evidence="1">Amino-acid biosynthesis; L-isoleucine biosynthesis; L-isoleucine from 2-oxobutanoate: step 3/4.</text>
</comment>
<comment type="pathway">
    <text evidence="1">Amino-acid biosynthesis; L-valine biosynthesis; L-valine from pyruvate: step 3/4.</text>
</comment>
<comment type="subunit">
    <text evidence="1">Homodimer.</text>
</comment>
<comment type="similarity">
    <text evidence="1">Belongs to the IlvD/Edd family.</text>
</comment>
<keyword id="KW-0001">2Fe-2S</keyword>
<keyword id="KW-0028">Amino-acid biosynthesis</keyword>
<keyword id="KW-0100">Branched-chain amino acid biosynthesis</keyword>
<keyword id="KW-0408">Iron</keyword>
<keyword id="KW-0411">Iron-sulfur</keyword>
<keyword id="KW-0456">Lyase</keyword>
<keyword id="KW-0460">Magnesium</keyword>
<keyword id="KW-0479">Metal-binding</keyword>
<keyword id="KW-1185">Reference proteome</keyword>
<feature type="chain" id="PRO_1000089383" description="Dihydroxy-acid dehydratase">
    <location>
        <begin position="1"/>
        <end position="616"/>
    </location>
</feature>
<feature type="active site" description="Proton acceptor" evidence="1">
    <location>
        <position position="517"/>
    </location>
</feature>
<feature type="binding site" evidence="1">
    <location>
        <position position="81"/>
    </location>
    <ligand>
        <name>Mg(2+)</name>
        <dbReference type="ChEBI" id="CHEBI:18420"/>
    </ligand>
</feature>
<feature type="binding site" evidence="1">
    <location>
        <position position="122"/>
    </location>
    <ligand>
        <name>[2Fe-2S] cluster</name>
        <dbReference type="ChEBI" id="CHEBI:190135"/>
    </ligand>
</feature>
<feature type="binding site" evidence="1">
    <location>
        <position position="123"/>
    </location>
    <ligand>
        <name>Mg(2+)</name>
        <dbReference type="ChEBI" id="CHEBI:18420"/>
    </ligand>
</feature>
<feature type="binding site" description="via carbamate group" evidence="1">
    <location>
        <position position="124"/>
    </location>
    <ligand>
        <name>Mg(2+)</name>
        <dbReference type="ChEBI" id="CHEBI:18420"/>
    </ligand>
</feature>
<feature type="binding site" evidence="1">
    <location>
        <position position="195"/>
    </location>
    <ligand>
        <name>[2Fe-2S] cluster</name>
        <dbReference type="ChEBI" id="CHEBI:190135"/>
    </ligand>
</feature>
<feature type="binding site" evidence="1">
    <location>
        <position position="491"/>
    </location>
    <ligand>
        <name>Mg(2+)</name>
        <dbReference type="ChEBI" id="CHEBI:18420"/>
    </ligand>
</feature>
<feature type="modified residue" description="N6-carboxylysine" evidence="1">
    <location>
        <position position="124"/>
    </location>
</feature>
<accession>B2VI72</accession>
<gene>
    <name evidence="1" type="primary">ilvD</name>
    <name type="ordered locus">ETA_01870</name>
</gene>
<name>ILVD_ERWT9</name>
<proteinExistence type="inferred from homology"/>
<reference key="1">
    <citation type="journal article" date="2008" name="Environ. Microbiol.">
        <title>The genome of Erwinia tasmaniensis strain Et1/99, a non-pathogenic bacterium in the genus Erwinia.</title>
        <authorList>
            <person name="Kube M."/>
            <person name="Migdoll A.M."/>
            <person name="Mueller I."/>
            <person name="Kuhl H."/>
            <person name="Beck A."/>
            <person name="Reinhardt R."/>
            <person name="Geider K."/>
        </authorList>
    </citation>
    <scope>NUCLEOTIDE SEQUENCE [LARGE SCALE GENOMIC DNA]</scope>
    <source>
        <strain>DSM 17950 / CFBP 7177 / CIP 109463 / NCPPB 4357 / Et1/99</strain>
    </source>
</reference>